<organism>
    <name type="scientific">Arabidopsis thaliana</name>
    <name type="common">Mouse-ear cress</name>
    <dbReference type="NCBI Taxonomy" id="3702"/>
    <lineage>
        <taxon>Eukaryota</taxon>
        <taxon>Viridiplantae</taxon>
        <taxon>Streptophyta</taxon>
        <taxon>Embryophyta</taxon>
        <taxon>Tracheophyta</taxon>
        <taxon>Spermatophyta</taxon>
        <taxon>Magnoliopsida</taxon>
        <taxon>eudicotyledons</taxon>
        <taxon>Gunneridae</taxon>
        <taxon>Pentapetalae</taxon>
        <taxon>rosids</taxon>
        <taxon>malvids</taxon>
        <taxon>Brassicales</taxon>
        <taxon>Brassicaceae</taxon>
        <taxon>Camelineae</taxon>
        <taxon>Arabidopsis</taxon>
    </lineage>
</organism>
<evidence type="ECO:0000255" key="1">
    <source>
        <dbReference type="PROSITE-ProRule" id="PRU00137"/>
    </source>
</evidence>
<evidence type="ECO:0000255" key="2">
    <source>
        <dbReference type="PROSITE-ProRule" id="PRU00176"/>
    </source>
</evidence>
<evidence type="ECO:0000256" key="3">
    <source>
        <dbReference type="SAM" id="MobiDB-lite"/>
    </source>
</evidence>
<evidence type="ECO:0000269" key="4">
    <source>
    </source>
</evidence>
<evidence type="ECO:0000269" key="5">
    <source>
    </source>
</evidence>
<evidence type="ECO:0000303" key="6">
    <source>
    </source>
</evidence>
<evidence type="ECO:0000305" key="7"/>
<evidence type="ECO:0000312" key="8">
    <source>
        <dbReference type="Araport" id="AT5G60980"/>
    </source>
</evidence>
<evidence type="ECO:0000312" key="9">
    <source>
        <dbReference type="EMBL" id="AED97407.1"/>
    </source>
</evidence>
<keyword id="KW-0025">Alternative splicing</keyword>
<keyword id="KW-0963">Cytoplasm</keyword>
<keyword id="KW-0539">Nucleus</keyword>
<keyword id="KW-1185">Reference proteome</keyword>
<keyword id="KW-0694">RNA-binding</keyword>
<keyword id="KW-0943">RNA-mediated gene silencing</keyword>
<feature type="chain" id="PRO_0000447464" description="Nuclear transport factor 2">
    <location>
        <begin position="1"/>
        <end position="460"/>
    </location>
</feature>
<feature type="domain" description="NTF2" evidence="1">
    <location>
        <begin position="15"/>
        <end position="131"/>
    </location>
</feature>
<feature type="domain" description="RRM" evidence="2">
    <location>
        <begin position="293"/>
        <end position="370"/>
    </location>
</feature>
<feature type="region of interest" description="Disordered" evidence="3">
    <location>
        <begin position="207"/>
        <end position="226"/>
    </location>
</feature>
<feature type="region of interest" description="Disordered" evidence="3">
    <location>
        <begin position="238"/>
        <end position="289"/>
    </location>
</feature>
<feature type="region of interest" description="Disordered" evidence="3">
    <location>
        <begin position="361"/>
        <end position="460"/>
    </location>
</feature>
<feature type="compositionally biased region" description="Gly residues" evidence="3">
    <location>
        <begin position="373"/>
        <end position="382"/>
    </location>
</feature>
<feature type="compositionally biased region" description="Low complexity" evidence="3">
    <location>
        <begin position="383"/>
        <end position="394"/>
    </location>
</feature>
<feature type="compositionally biased region" description="Gly residues" evidence="3">
    <location>
        <begin position="399"/>
        <end position="416"/>
    </location>
</feature>
<feature type="compositionally biased region" description="Gly residues" evidence="3">
    <location>
        <begin position="450"/>
        <end position="460"/>
    </location>
</feature>
<feature type="splice variant" id="VSP_060196" description="In isoform 2.">
    <location>
        <position position="331"/>
    </location>
</feature>
<feature type="sequence conflict" description="In Ref. 4; AAM62628." evidence="7" ref="4">
    <original>L</original>
    <variation>P</variation>
    <location>
        <position position="94"/>
    </location>
</feature>
<sequence>MAQQEASPSPGAEVVGRAFVEQYYHILHQSPGLVHRFYQDSSFLTRPDVTGAVTTVTTMQAINDKILSLKYEDYTAEIETADAQESHERGVIVLVTGRLTGNDNVRKKFSQSFFLAPQDKGYFVLNDVFRFLEEKEVTAQARSVPINGTTRDVQAPIEPERVVVSHEPEVEPEPVASIEEEDLDNVAEVYDPSDKDEGVVVDVEPIEPPTQISHNEILSVPQGDAPKHSYASILKQMKSSPAPTTHVARNKPRPAPVNQKLTAPPAEPAARPEASAHENVPNSSHVDVEDDGHSIYVRNLPFDSTPTQLEEVFKNFGAIKHEGIQVRSNKQQGFCFGFVEFETSSGKQSALEASPVTIGDRQAVVEEKKTNSRGGGNNGGSRGRYFSGRGSFRNESFKGGRGGGGRGGYGRGGGEFSGRPKSSNPRNGGEGYQRVPQNGGGGRGGRGEGGRGGARGGGSS</sequence>
<name>NTF2_ARATH</name>
<proteinExistence type="evidence at protein level"/>
<accession>Q9FME2</accession>
<accession>F4K1Y4</accession>
<accession>Q8LEI7</accession>
<gene>
    <name evidence="6" type="primary">NTF2</name>
    <name evidence="8" type="ordered locus">At5g60980</name>
    <name evidence="9" type="ORF">MSL3.12</name>
</gene>
<protein>
    <recommendedName>
        <fullName evidence="6">Nuclear transport factor 2</fullName>
        <shortName evidence="6">AtNTF2</shortName>
    </recommendedName>
</protein>
<reference key="1">
    <citation type="journal article" date="1997" name="DNA Res.">
        <title>Structural analysis of Arabidopsis thaliana chromosome 5. III. Sequence features of the regions of 1,191,918 bp covered by seventeen physically assigned P1 clones.</title>
        <authorList>
            <person name="Nakamura Y."/>
            <person name="Sato S."/>
            <person name="Kaneko T."/>
            <person name="Kotani H."/>
            <person name="Asamizu E."/>
            <person name="Miyajima N."/>
            <person name="Tabata S."/>
        </authorList>
    </citation>
    <scope>NUCLEOTIDE SEQUENCE [LARGE SCALE GENOMIC DNA]</scope>
    <source>
        <strain>cv. Columbia</strain>
    </source>
</reference>
<reference key="2">
    <citation type="journal article" date="2017" name="Plant J.">
        <title>Araport11: a complete reannotation of the Arabidopsis thaliana reference genome.</title>
        <authorList>
            <person name="Cheng C.Y."/>
            <person name="Krishnakumar V."/>
            <person name="Chan A.P."/>
            <person name="Thibaud-Nissen F."/>
            <person name="Schobel S."/>
            <person name="Town C.D."/>
        </authorList>
    </citation>
    <scope>GENOME REANNOTATION</scope>
    <source>
        <strain>cv. Columbia</strain>
    </source>
</reference>
<reference key="3">
    <citation type="journal article" date="2003" name="Science">
        <title>Empirical analysis of transcriptional activity in the Arabidopsis genome.</title>
        <authorList>
            <person name="Yamada K."/>
            <person name="Lim J."/>
            <person name="Dale J.M."/>
            <person name="Chen H."/>
            <person name="Shinn P."/>
            <person name="Palm C.J."/>
            <person name="Southwick A.M."/>
            <person name="Wu H.C."/>
            <person name="Kim C.J."/>
            <person name="Nguyen M."/>
            <person name="Pham P.K."/>
            <person name="Cheuk R.F."/>
            <person name="Karlin-Newmann G."/>
            <person name="Liu S.X."/>
            <person name="Lam B."/>
            <person name="Sakano H."/>
            <person name="Wu T."/>
            <person name="Yu G."/>
            <person name="Miranda M."/>
            <person name="Quach H.L."/>
            <person name="Tripp M."/>
            <person name="Chang C.H."/>
            <person name="Lee J.M."/>
            <person name="Toriumi M.J."/>
            <person name="Chan M.M."/>
            <person name="Tang C.C."/>
            <person name="Onodera C.S."/>
            <person name="Deng J.M."/>
            <person name="Akiyama K."/>
            <person name="Ansari Y."/>
            <person name="Arakawa T."/>
            <person name="Banh J."/>
            <person name="Banno F."/>
            <person name="Bowser L."/>
            <person name="Brooks S.Y."/>
            <person name="Carninci P."/>
            <person name="Chao Q."/>
            <person name="Choy N."/>
            <person name="Enju A."/>
            <person name="Goldsmith A.D."/>
            <person name="Gurjal M."/>
            <person name="Hansen N.F."/>
            <person name="Hayashizaki Y."/>
            <person name="Johnson-Hopson C."/>
            <person name="Hsuan V.W."/>
            <person name="Iida K."/>
            <person name="Karnes M."/>
            <person name="Khan S."/>
            <person name="Koesema E."/>
            <person name="Ishida J."/>
            <person name="Jiang P.X."/>
            <person name="Jones T."/>
            <person name="Kawai J."/>
            <person name="Kamiya A."/>
            <person name="Meyers C."/>
            <person name="Nakajima M."/>
            <person name="Narusaka M."/>
            <person name="Seki M."/>
            <person name="Sakurai T."/>
            <person name="Satou M."/>
            <person name="Tamse R."/>
            <person name="Vaysberg M."/>
            <person name="Wallender E.K."/>
            <person name="Wong C."/>
            <person name="Yamamura Y."/>
            <person name="Yuan S."/>
            <person name="Shinozaki K."/>
            <person name="Davis R.W."/>
            <person name="Theologis A."/>
            <person name="Ecker J.R."/>
        </authorList>
    </citation>
    <scope>NUCLEOTIDE SEQUENCE [LARGE SCALE MRNA] (ISOFORM 1)</scope>
    <source>
        <strain>cv. Columbia</strain>
    </source>
</reference>
<reference key="4">
    <citation type="submission" date="2002-03" db="EMBL/GenBank/DDBJ databases">
        <title>Full-length cDNA from Arabidopsis thaliana.</title>
        <authorList>
            <person name="Brover V.V."/>
            <person name="Troukhan M.E."/>
            <person name="Alexandrov N.A."/>
            <person name="Lu Y.-P."/>
            <person name="Flavell R.B."/>
            <person name="Feldmann K.A."/>
        </authorList>
    </citation>
    <scope>NUCLEOTIDE SEQUENCE [LARGE SCALE MRNA] (ISOFORM 2)</scope>
</reference>
<reference key="5">
    <citation type="journal article" date="2006" name="Plant Cell">
        <title>A family of microRNAs present in plants and animals.</title>
        <authorList>
            <person name="Arteaga-Vazquez M."/>
            <person name="Caballero-Perez J."/>
            <person name="Vielle-Calzada J.-P."/>
        </authorList>
    </citation>
    <scope>REGULATION BY MAV8</scope>
</reference>
<reference key="6">
    <citation type="journal article" date="2012" name="Mol. Cell. Proteomics">
        <title>Comparative large-scale characterisation of plant vs. mammal proteins reveals similar and idiosyncratic N-alpha acetylation features.</title>
        <authorList>
            <person name="Bienvenut W.V."/>
            <person name="Sumpton D."/>
            <person name="Martinez A."/>
            <person name="Lilla S."/>
            <person name="Espagne C."/>
            <person name="Meinnel T."/>
            <person name="Giglione C."/>
        </authorList>
    </citation>
    <scope>IDENTIFICATION BY MASS SPECTROMETRY [LARGE SCALE ANALYSIS]</scope>
</reference>
<reference key="7">
    <citation type="journal article" date="2017" name="J. Biosci.">
        <title>AtMBD6, a methyl CpG binding domain protein, maintains gene silencing in Arabidopsis by interacting with RNA binding proteins.</title>
        <authorList>
            <person name="Parida A.P."/>
            <person name="Sharma A."/>
            <person name="Sharma A.K."/>
        </authorList>
    </citation>
    <scope>FUNCTION</scope>
    <scope>DISRUPTION PHENOTYPE</scope>
    <scope>INTERACTION WITH MBD6</scope>
    <scope>SUBCELLULAR LOCATION</scope>
</reference>
<comment type="function">
    <text evidence="5">Involved in RNA-directed DNA methylation (RdDM).</text>
</comment>
<comment type="subunit">
    <text evidence="5">Interacts with MBD6.</text>
</comment>
<comment type="subcellular location">
    <subcellularLocation>
        <location evidence="5">Cytoplasm</location>
    </subcellularLocation>
    <subcellularLocation>
        <location evidence="5">Nucleus</location>
    </subcellularLocation>
</comment>
<comment type="alternative products">
    <event type="alternative splicing"/>
    <isoform>
        <id>Q9FME2-1</id>
        <name>1</name>
        <sequence type="displayed"/>
    </isoform>
    <isoform>
        <id>Q9FME2-2</id>
        <name>2</name>
        <sequence type="described" ref="VSP_060196"/>
    </isoform>
</comment>
<comment type="induction">
    <text evidence="4">Probably regulated by the microRNA MAV8.</text>
</comment>
<comment type="disruption phenotype">
    <text evidence="5">Reduced DNA methylation in some of the targets of RNA-directed DNA methylation (RdDM).</text>
</comment>
<dbReference type="EMBL" id="AB008269">
    <property type="protein sequence ID" value="BAB10647.1"/>
    <property type="molecule type" value="Genomic_DNA"/>
</dbReference>
<dbReference type="EMBL" id="CP002688">
    <property type="protein sequence ID" value="AED97406.1"/>
    <property type="molecule type" value="Genomic_DNA"/>
</dbReference>
<dbReference type="EMBL" id="CP002688">
    <property type="protein sequence ID" value="AED97407.1"/>
    <property type="molecule type" value="Genomic_DNA"/>
</dbReference>
<dbReference type="EMBL" id="CP002688">
    <property type="protein sequence ID" value="ANM69708.1"/>
    <property type="molecule type" value="Genomic_DNA"/>
</dbReference>
<dbReference type="EMBL" id="CP002688">
    <property type="protein sequence ID" value="ANM69709.1"/>
    <property type="molecule type" value="Genomic_DNA"/>
</dbReference>
<dbReference type="EMBL" id="AY062108">
    <property type="protein sequence ID" value="AAL32982.1"/>
    <property type="molecule type" value="mRNA"/>
</dbReference>
<dbReference type="EMBL" id="BT003010">
    <property type="protein sequence ID" value="AAO23575.1"/>
    <property type="molecule type" value="mRNA"/>
</dbReference>
<dbReference type="EMBL" id="AY085400">
    <property type="protein sequence ID" value="AAM62628.1"/>
    <property type="molecule type" value="mRNA"/>
</dbReference>
<dbReference type="RefSeq" id="NP_001331368.1">
    <molecule id="Q9FME2-1"/>
    <property type="nucleotide sequence ID" value="NM_001345438.1"/>
</dbReference>
<dbReference type="RefSeq" id="NP_001331369.1">
    <molecule id="Q9FME2-2"/>
    <property type="nucleotide sequence ID" value="NM_001345439.1"/>
</dbReference>
<dbReference type="RefSeq" id="NP_200906.2">
    <molecule id="Q9FME2-1"/>
    <property type="nucleotide sequence ID" value="NM_125491.3"/>
</dbReference>
<dbReference type="RefSeq" id="NP_851235.1">
    <molecule id="Q9FME2-2"/>
    <property type="nucleotide sequence ID" value="NM_180904.2"/>
</dbReference>
<dbReference type="SMR" id="Q9FME2"/>
<dbReference type="FunCoup" id="Q9FME2">
    <property type="interactions" value="4121"/>
</dbReference>
<dbReference type="IntAct" id="Q9FME2">
    <property type="interactions" value="1"/>
</dbReference>
<dbReference type="STRING" id="3702.Q9FME2"/>
<dbReference type="iPTMnet" id="Q9FME2"/>
<dbReference type="PaxDb" id="3702-AT5G60980.2"/>
<dbReference type="ProteomicsDB" id="185183"/>
<dbReference type="ProteomicsDB" id="189446">
    <molecule id="Q9FME2-1"/>
</dbReference>
<dbReference type="EnsemblPlants" id="AT5G60980.1">
    <molecule id="Q9FME2-2"/>
    <property type="protein sequence ID" value="AT5G60980.1"/>
    <property type="gene ID" value="AT5G60980"/>
</dbReference>
<dbReference type="EnsemblPlants" id="AT5G60980.2">
    <molecule id="Q9FME2-1"/>
    <property type="protein sequence ID" value="AT5G60980.2"/>
    <property type="gene ID" value="AT5G60980"/>
</dbReference>
<dbReference type="EnsemblPlants" id="AT5G60980.3">
    <molecule id="Q9FME2-1"/>
    <property type="protein sequence ID" value="AT5G60980.3"/>
    <property type="gene ID" value="AT5G60980"/>
</dbReference>
<dbReference type="EnsemblPlants" id="AT5G60980.4">
    <molecule id="Q9FME2-2"/>
    <property type="protein sequence ID" value="AT5G60980.4"/>
    <property type="gene ID" value="AT5G60980"/>
</dbReference>
<dbReference type="GeneID" id="836219"/>
<dbReference type="Gramene" id="AT5G60980.1">
    <molecule id="Q9FME2-2"/>
    <property type="protein sequence ID" value="AT5G60980.1"/>
    <property type="gene ID" value="AT5G60980"/>
</dbReference>
<dbReference type="Gramene" id="AT5G60980.2">
    <molecule id="Q9FME2-1"/>
    <property type="protein sequence ID" value="AT5G60980.2"/>
    <property type="gene ID" value="AT5G60980"/>
</dbReference>
<dbReference type="Gramene" id="AT5G60980.3">
    <molecule id="Q9FME2-1"/>
    <property type="protein sequence ID" value="AT5G60980.3"/>
    <property type="gene ID" value="AT5G60980"/>
</dbReference>
<dbReference type="Gramene" id="AT5G60980.4">
    <molecule id="Q9FME2-2"/>
    <property type="protein sequence ID" value="AT5G60980.4"/>
    <property type="gene ID" value="AT5G60980"/>
</dbReference>
<dbReference type="KEGG" id="ath:AT5G60980"/>
<dbReference type="Araport" id="AT5G60980"/>
<dbReference type="TAIR" id="AT5G60980">
    <property type="gene designation" value="NTF2"/>
</dbReference>
<dbReference type="eggNOG" id="KOG0116">
    <property type="taxonomic scope" value="Eukaryota"/>
</dbReference>
<dbReference type="HOGENOM" id="CLU_026954_3_0_1"/>
<dbReference type="InParanoid" id="Q9FME2"/>
<dbReference type="OMA" id="YGQMDIN"/>
<dbReference type="OrthoDB" id="339151at2759"/>
<dbReference type="PhylomeDB" id="Q9FME2"/>
<dbReference type="CD-CODE" id="4299E36E">
    <property type="entry name" value="Nucleolus"/>
</dbReference>
<dbReference type="PRO" id="PR:Q9FME2"/>
<dbReference type="Proteomes" id="UP000006548">
    <property type="component" value="Chromosome 5"/>
</dbReference>
<dbReference type="ExpressionAtlas" id="Q9FME2">
    <property type="expression patterns" value="baseline and differential"/>
</dbReference>
<dbReference type="GO" id="GO:0005737">
    <property type="term" value="C:cytoplasm"/>
    <property type="evidence" value="ECO:0000314"/>
    <property type="project" value="UniProtKB"/>
</dbReference>
<dbReference type="GO" id="GO:0005634">
    <property type="term" value="C:nucleus"/>
    <property type="evidence" value="ECO:0000314"/>
    <property type="project" value="UniProtKB"/>
</dbReference>
<dbReference type="GO" id="GO:0009536">
    <property type="term" value="C:plastid"/>
    <property type="evidence" value="ECO:0007005"/>
    <property type="project" value="TAIR"/>
</dbReference>
<dbReference type="GO" id="GO:0003729">
    <property type="term" value="F:mRNA binding"/>
    <property type="evidence" value="ECO:0000314"/>
    <property type="project" value="TAIR"/>
</dbReference>
<dbReference type="GO" id="GO:0031047">
    <property type="term" value="P:regulatory ncRNA-mediated gene silencing"/>
    <property type="evidence" value="ECO:0007669"/>
    <property type="project" value="UniProtKB-KW"/>
</dbReference>
<dbReference type="CDD" id="cd00780">
    <property type="entry name" value="NTF2"/>
    <property type="match status" value="1"/>
</dbReference>
<dbReference type="CDD" id="cd00590">
    <property type="entry name" value="RRM_SF"/>
    <property type="match status" value="1"/>
</dbReference>
<dbReference type="FunFam" id="3.10.450.50:FF:000003">
    <property type="entry name" value="Nuclear transport factor 2 family protein"/>
    <property type="match status" value="1"/>
</dbReference>
<dbReference type="Gene3D" id="3.10.450.50">
    <property type="match status" value="1"/>
</dbReference>
<dbReference type="Gene3D" id="3.30.70.330">
    <property type="match status" value="1"/>
</dbReference>
<dbReference type="InterPro" id="IPR032710">
    <property type="entry name" value="NTF2-like_dom_sf"/>
</dbReference>
<dbReference type="InterPro" id="IPR002075">
    <property type="entry name" value="NTF2_dom"/>
</dbReference>
<dbReference type="InterPro" id="IPR018222">
    <property type="entry name" value="Nuclear_transport_factor_2_euk"/>
</dbReference>
<dbReference type="InterPro" id="IPR012677">
    <property type="entry name" value="Nucleotide-bd_a/b_plait_sf"/>
</dbReference>
<dbReference type="InterPro" id="IPR039539">
    <property type="entry name" value="Ras_GTPase_bind_prot"/>
</dbReference>
<dbReference type="InterPro" id="IPR035979">
    <property type="entry name" value="RBD_domain_sf"/>
</dbReference>
<dbReference type="InterPro" id="IPR000504">
    <property type="entry name" value="RRM_dom"/>
</dbReference>
<dbReference type="PANTHER" id="PTHR10693:SF75">
    <property type="entry name" value="NUCLEAR TRANSPORT FACTOR 2"/>
    <property type="match status" value="1"/>
</dbReference>
<dbReference type="PANTHER" id="PTHR10693">
    <property type="entry name" value="RAS GTPASE-ACTIVATING PROTEIN-BINDING PROTEIN"/>
    <property type="match status" value="1"/>
</dbReference>
<dbReference type="Pfam" id="PF02136">
    <property type="entry name" value="NTF2"/>
    <property type="match status" value="1"/>
</dbReference>
<dbReference type="Pfam" id="PF00076">
    <property type="entry name" value="RRM_1"/>
    <property type="match status" value="1"/>
</dbReference>
<dbReference type="SMART" id="SM00360">
    <property type="entry name" value="RRM"/>
    <property type="match status" value="1"/>
</dbReference>
<dbReference type="SUPFAM" id="SSF54427">
    <property type="entry name" value="NTF2-like"/>
    <property type="match status" value="1"/>
</dbReference>
<dbReference type="SUPFAM" id="SSF54928">
    <property type="entry name" value="RNA-binding domain, RBD"/>
    <property type="match status" value="1"/>
</dbReference>
<dbReference type="PROSITE" id="PS50177">
    <property type="entry name" value="NTF2_DOMAIN"/>
    <property type="match status" value="1"/>
</dbReference>
<dbReference type="PROSITE" id="PS50102">
    <property type="entry name" value="RRM"/>
    <property type="match status" value="1"/>
</dbReference>